<gene>
    <name evidence="1" type="primary">rpsP</name>
    <name type="ordered locus">xcc-b100_3140</name>
</gene>
<sequence length="86" mass="9633">MVKIRLTRGGAKKRPFYHIIVTDVRSARDGRNIERLGYYNPVAQGAEPRVVLDVARVDHWVGQGAQLTDKVRNLYREASKSQAAAA</sequence>
<keyword id="KW-0687">Ribonucleoprotein</keyword>
<keyword id="KW-0689">Ribosomal protein</keyword>
<organism>
    <name type="scientific">Xanthomonas campestris pv. campestris (strain B100)</name>
    <dbReference type="NCBI Taxonomy" id="509169"/>
    <lineage>
        <taxon>Bacteria</taxon>
        <taxon>Pseudomonadati</taxon>
        <taxon>Pseudomonadota</taxon>
        <taxon>Gammaproteobacteria</taxon>
        <taxon>Lysobacterales</taxon>
        <taxon>Lysobacteraceae</taxon>
        <taxon>Xanthomonas</taxon>
    </lineage>
</organism>
<name>RS16_XANCB</name>
<accession>B0RXD9</accession>
<proteinExistence type="inferred from homology"/>
<protein>
    <recommendedName>
        <fullName evidence="1">Small ribosomal subunit protein bS16</fullName>
    </recommendedName>
    <alternativeName>
        <fullName evidence="2">30S ribosomal protein S16</fullName>
    </alternativeName>
</protein>
<feature type="chain" id="PRO_1000122598" description="Small ribosomal subunit protein bS16">
    <location>
        <begin position="1"/>
        <end position="86"/>
    </location>
</feature>
<evidence type="ECO:0000255" key="1">
    <source>
        <dbReference type="HAMAP-Rule" id="MF_00385"/>
    </source>
</evidence>
<evidence type="ECO:0000305" key="2"/>
<reference key="1">
    <citation type="journal article" date="2008" name="J. Biotechnol.">
        <title>The genome of Xanthomonas campestris pv. campestris B100 and its use for the reconstruction of metabolic pathways involved in xanthan biosynthesis.</title>
        <authorList>
            <person name="Vorhoelter F.-J."/>
            <person name="Schneiker S."/>
            <person name="Goesmann A."/>
            <person name="Krause L."/>
            <person name="Bekel T."/>
            <person name="Kaiser O."/>
            <person name="Linke B."/>
            <person name="Patschkowski T."/>
            <person name="Rueckert C."/>
            <person name="Schmid J."/>
            <person name="Sidhu V.K."/>
            <person name="Sieber V."/>
            <person name="Tauch A."/>
            <person name="Watt S.A."/>
            <person name="Weisshaar B."/>
            <person name="Becker A."/>
            <person name="Niehaus K."/>
            <person name="Puehler A."/>
        </authorList>
    </citation>
    <scope>NUCLEOTIDE SEQUENCE [LARGE SCALE GENOMIC DNA]</scope>
    <source>
        <strain>B100</strain>
    </source>
</reference>
<comment type="similarity">
    <text evidence="1">Belongs to the bacterial ribosomal protein bS16 family.</text>
</comment>
<dbReference type="EMBL" id="AM920689">
    <property type="protein sequence ID" value="CAP52505.1"/>
    <property type="molecule type" value="Genomic_DNA"/>
</dbReference>
<dbReference type="SMR" id="B0RXD9"/>
<dbReference type="KEGG" id="xca:xcc-b100_3140"/>
<dbReference type="HOGENOM" id="CLU_100590_5_1_6"/>
<dbReference type="Proteomes" id="UP000001188">
    <property type="component" value="Chromosome"/>
</dbReference>
<dbReference type="GO" id="GO:0005737">
    <property type="term" value="C:cytoplasm"/>
    <property type="evidence" value="ECO:0007669"/>
    <property type="project" value="UniProtKB-ARBA"/>
</dbReference>
<dbReference type="GO" id="GO:0015935">
    <property type="term" value="C:small ribosomal subunit"/>
    <property type="evidence" value="ECO:0007669"/>
    <property type="project" value="TreeGrafter"/>
</dbReference>
<dbReference type="GO" id="GO:0003735">
    <property type="term" value="F:structural constituent of ribosome"/>
    <property type="evidence" value="ECO:0007669"/>
    <property type="project" value="InterPro"/>
</dbReference>
<dbReference type="GO" id="GO:0006412">
    <property type="term" value="P:translation"/>
    <property type="evidence" value="ECO:0007669"/>
    <property type="project" value="UniProtKB-UniRule"/>
</dbReference>
<dbReference type="FunFam" id="3.30.1320.10:FF:000008">
    <property type="entry name" value="30S ribosomal protein S16"/>
    <property type="match status" value="1"/>
</dbReference>
<dbReference type="Gene3D" id="3.30.1320.10">
    <property type="match status" value="1"/>
</dbReference>
<dbReference type="HAMAP" id="MF_00385">
    <property type="entry name" value="Ribosomal_bS16"/>
    <property type="match status" value="1"/>
</dbReference>
<dbReference type="InterPro" id="IPR000307">
    <property type="entry name" value="Ribosomal_bS16"/>
</dbReference>
<dbReference type="InterPro" id="IPR020592">
    <property type="entry name" value="Ribosomal_bS16_CS"/>
</dbReference>
<dbReference type="InterPro" id="IPR023803">
    <property type="entry name" value="Ribosomal_bS16_dom_sf"/>
</dbReference>
<dbReference type="NCBIfam" id="TIGR00002">
    <property type="entry name" value="S16"/>
    <property type="match status" value="1"/>
</dbReference>
<dbReference type="PANTHER" id="PTHR12919">
    <property type="entry name" value="30S RIBOSOMAL PROTEIN S16"/>
    <property type="match status" value="1"/>
</dbReference>
<dbReference type="PANTHER" id="PTHR12919:SF20">
    <property type="entry name" value="SMALL RIBOSOMAL SUBUNIT PROTEIN BS16M"/>
    <property type="match status" value="1"/>
</dbReference>
<dbReference type="Pfam" id="PF00886">
    <property type="entry name" value="Ribosomal_S16"/>
    <property type="match status" value="1"/>
</dbReference>
<dbReference type="SUPFAM" id="SSF54565">
    <property type="entry name" value="Ribosomal protein S16"/>
    <property type="match status" value="1"/>
</dbReference>
<dbReference type="PROSITE" id="PS00732">
    <property type="entry name" value="RIBOSOMAL_S16"/>
    <property type="match status" value="1"/>
</dbReference>